<name>HBB_MACFA</name>
<reference key="1">
    <citation type="journal article" date="1987" name="J. Mol. Evol.">
        <title>Nucleotide sequence of the beta-globin genes in gorilla and macaque: the origin of nucleotide polymorphisms in human.</title>
        <authorList>
            <person name="Savatier P."/>
            <person name="Trabuchet G."/>
            <person name="Chebloune Y."/>
            <person name="Faure C."/>
            <person name="Verdier G."/>
            <person name="Nigon V.M."/>
        </authorList>
    </citation>
    <scope>NUCLEOTIDE SEQUENCE [GENOMIC DNA] OF 1-121</scope>
</reference>
<reference key="2">
    <citation type="journal article" date="1970" name="Biochim. Biophys. Acta">
        <title>Structural studies on the major and minor haemoglobin of the monkey Macaca irus.</title>
        <authorList>
            <person name="Wade P.T."/>
            <person name="Barnicot N.A."/>
            <person name="Huehns E.R."/>
        </authorList>
    </citation>
    <scope>PROTEIN SEQUENCE OF 2-147</scope>
</reference>
<reference key="3">
    <citation type="journal article" date="2000" name="Mol. Biol. Evol.">
        <title>Strand symmetry around the beta-globin origin of replication in primates.</title>
        <authorList>
            <person name="Francino M.P."/>
            <person name="Ochman H."/>
        </authorList>
    </citation>
    <scope>NUCLEOTIDE SEQUENCE [GENOMIC DNA] OF 107-147</scope>
    <source>
        <tissue>Blood</tissue>
    </source>
</reference>
<gene>
    <name type="primary">HBB</name>
</gene>
<proteinExistence type="evidence at protein level"/>
<protein>
    <recommendedName>
        <fullName>Hemoglobin subunit beta</fullName>
    </recommendedName>
    <alternativeName>
        <fullName>Beta-globin</fullName>
    </alternativeName>
    <alternativeName>
        <fullName>Hemoglobin beta chain</fullName>
    </alternativeName>
</protein>
<accession>P68223</accession>
<accession>P02027</accession>
<accession>Q9TSL4</accession>
<feature type="initiator methionine" description="Removed" evidence="1 4">
    <location>
        <position position="1"/>
    </location>
</feature>
<feature type="chain" id="PRO_0000053000" description="Hemoglobin subunit beta">
    <location>
        <begin position="2"/>
        <end position="147"/>
    </location>
</feature>
<feature type="domain" description="Globin" evidence="3">
    <location>
        <begin position="3"/>
        <end position="147"/>
    </location>
</feature>
<feature type="binding site" description="distal binding residue">
    <location>
        <position position="64"/>
    </location>
    <ligand>
        <name>heme b</name>
        <dbReference type="ChEBI" id="CHEBI:60344"/>
    </ligand>
    <ligandPart>
        <name>Fe</name>
        <dbReference type="ChEBI" id="CHEBI:18248"/>
    </ligandPart>
</feature>
<feature type="binding site" description="proximal binding residue">
    <location>
        <position position="93"/>
    </location>
    <ligand>
        <name>heme b</name>
        <dbReference type="ChEBI" id="CHEBI:60344"/>
    </ligand>
    <ligandPart>
        <name>Fe</name>
        <dbReference type="ChEBI" id="CHEBI:18248"/>
    </ligandPart>
</feature>
<feature type="modified residue" description="N-acetylvaline" evidence="1">
    <location>
        <position position="2"/>
    </location>
</feature>
<feature type="modified residue" description="Phosphothreonine" evidence="2">
    <location>
        <position position="13"/>
    </location>
</feature>
<feature type="modified residue" description="Phosphoserine" evidence="2">
    <location>
        <position position="45"/>
    </location>
</feature>
<feature type="modified residue" description="N6-acetyllysine" evidence="2">
    <location>
        <position position="60"/>
    </location>
</feature>
<feature type="modified residue" description="N6-acetyllysine" evidence="2">
    <location>
        <position position="83"/>
    </location>
</feature>
<feature type="modified residue" description="S-nitrosocysteine" evidence="2">
    <location>
        <position position="94"/>
    </location>
</feature>
<feature type="modified residue" description="N6-acetyllysine" evidence="2">
    <location>
        <position position="145"/>
    </location>
</feature>
<comment type="function">
    <text>Involved in oxygen transport from the lung to the various peripheral tissues.</text>
</comment>
<comment type="subunit">
    <text>Heterotetramer of two alpha chains and two beta chains.</text>
</comment>
<comment type="tissue specificity">
    <text>Red blood cells.</text>
</comment>
<comment type="similarity">
    <text evidence="3">Belongs to the globin family.</text>
</comment>
<organism>
    <name type="scientific">Macaca fascicularis</name>
    <name type="common">Crab-eating macaque</name>
    <name type="synonym">Cynomolgus monkey</name>
    <dbReference type="NCBI Taxonomy" id="9541"/>
    <lineage>
        <taxon>Eukaryota</taxon>
        <taxon>Metazoa</taxon>
        <taxon>Chordata</taxon>
        <taxon>Craniata</taxon>
        <taxon>Vertebrata</taxon>
        <taxon>Euteleostomi</taxon>
        <taxon>Mammalia</taxon>
        <taxon>Eutheria</taxon>
        <taxon>Euarchontoglires</taxon>
        <taxon>Primates</taxon>
        <taxon>Haplorrhini</taxon>
        <taxon>Catarrhini</taxon>
        <taxon>Cercopithecidae</taxon>
        <taxon>Cercopithecinae</taxon>
        <taxon>Macaca</taxon>
    </lineage>
</organism>
<dbReference type="EMBL" id="X05665">
    <property type="protein sequence ID" value="CAA29153.1"/>
    <property type="molecule type" value="Genomic_DNA"/>
</dbReference>
<dbReference type="EMBL" id="AF205410">
    <property type="protein sequence ID" value="AAF23761.1"/>
    <property type="molecule type" value="Genomic_DNA"/>
</dbReference>
<dbReference type="PIR" id="A29665">
    <property type="entry name" value="HBMQC"/>
</dbReference>
<dbReference type="RefSeq" id="NP_001270296.1">
    <property type="nucleotide sequence ID" value="NM_001283367.1"/>
</dbReference>
<dbReference type="SMR" id="P68223"/>
<dbReference type="STRING" id="9541.ENSMFAP00000037110"/>
<dbReference type="eggNOG" id="KOG3378">
    <property type="taxonomic scope" value="Eukaryota"/>
</dbReference>
<dbReference type="Proteomes" id="UP000233100">
    <property type="component" value="Unplaced"/>
</dbReference>
<dbReference type="GO" id="GO:0072562">
    <property type="term" value="C:blood microparticle"/>
    <property type="evidence" value="ECO:0007669"/>
    <property type="project" value="TreeGrafter"/>
</dbReference>
<dbReference type="GO" id="GO:0031838">
    <property type="term" value="C:haptoglobin-hemoglobin complex"/>
    <property type="evidence" value="ECO:0007669"/>
    <property type="project" value="TreeGrafter"/>
</dbReference>
<dbReference type="GO" id="GO:0005833">
    <property type="term" value="C:hemoglobin complex"/>
    <property type="evidence" value="ECO:0007669"/>
    <property type="project" value="InterPro"/>
</dbReference>
<dbReference type="GO" id="GO:0031720">
    <property type="term" value="F:haptoglobin binding"/>
    <property type="evidence" value="ECO:0007669"/>
    <property type="project" value="TreeGrafter"/>
</dbReference>
<dbReference type="GO" id="GO:0020037">
    <property type="term" value="F:heme binding"/>
    <property type="evidence" value="ECO:0007669"/>
    <property type="project" value="InterPro"/>
</dbReference>
<dbReference type="GO" id="GO:0031721">
    <property type="term" value="F:hemoglobin alpha binding"/>
    <property type="evidence" value="ECO:0007669"/>
    <property type="project" value="TreeGrafter"/>
</dbReference>
<dbReference type="GO" id="GO:0046872">
    <property type="term" value="F:metal ion binding"/>
    <property type="evidence" value="ECO:0007669"/>
    <property type="project" value="UniProtKB-KW"/>
</dbReference>
<dbReference type="GO" id="GO:0043177">
    <property type="term" value="F:organic acid binding"/>
    <property type="evidence" value="ECO:0007669"/>
    <property type="project" value="TreeGrafter"/>
</dbReference>
<dbReference type="GO" id="GO:0019825">
    <property type="term" value="F:oxygen binding"/>
    <property type="evidence" value="ECO:0007669"/>
    <property type="project" value="InterPro"/>
</dbReference>
<dbReference type="GO" id="GO:0005344">
    <property type="term" value="F:oxygen carrier activity"/>
    <property type="evidence" value="ECO:0007669"/>
    <property type="project" value="UniProtKB-KW"/>
</dbReference>
<dbReference type="GO" id="GO:0004601">
    <property type="term" value="F:peroxidase activity"/>
    <property type="evidence" value="ECO:0007669"/>
    <property type="project" value="TreeGrafter"/>
</dbReference>
<dbReference type="GO" id="GO:0042744">
    <property type="term" value="P:hydrogen peroxide catabolic process"/>
    <property type="evidence" value="ECO:0007669"/>
    <property type="project" value="TreeGrafter"/>
</dbReference>
<dbReference type="CDD" id="cd08925">
    <property type="entry name" value="Hb-beta-like"/>
    <property type="match status" value="1"/>
</dbReference>
<dbReference type="FunFam" id="1.10.490.10:FF:000001">
    <property type="entry name" value="Hemoglobin subunit beta"/>
    <property type="match status" value="1"/>
</dbReference>
<dbReference type="Gene3D" id="1.10.490.10">
    <property type="entry name" value="Globins"/>
    <property type="match status" value="1"/>
</dbReference>
<dbReference type="InterPro" id="IPR000971">
    <property type="entry name" value="Globin"/>
</dbReference>
<dbReference type="InterPro" id="IPR009050">
    <property type="entry name" value="Globin-like_sf"/>
</dbReference>
<dbReference type="InterPro" id="IPR012292">
    <property type="entry name" value="Globin/Proto"/>
</dbReference>
<dbReference type="InterPro" id="IPR002337">
    <property type="entry name" value="Hemoglobin_b"/>
</dbReference>
<dbReference type="InterPro" id="IPR050056">
    <property type="entry name" value="Hemoglobin_oxygen_transport"/>
</dbReference>
<dbReference type="PANTHER" id="PTHR11442">
    <property type="entry name" value="HEMOGLOBIN FAMILY MEMBER"/>
    <property type="match status" value="1"/>
</dbReference>
<dbReference type="PANTHER" id="PTHR11442:SF42">
    <property type="entry name" value="HEMOGLOBIN SUBUNIT BETA"/>
    <property type="match status" value="1"/>
</dbReference>
<dbReference type="Pfam" id="PF00042">
    <property type="entry name" value="Globin"/>
    <property type="match status" value="1"/>
</dbReference>
<dbReference type="PRINTS" id="PR00814">
    <property type="entry name" value="BETAHAEM"/>
</dbReference>
<dbReference type="SUPFAM" id="SSF46458">
    <property type="entry name" value="Globin-like"/>
    <property type="match status" value="1"/>
</dbReference>
<dbReference type="PROSITE" id="PS01033">
    <property type="entry name" value="GLOBIN"/>
    <property type="match status" value="1"/>
</dbReference>
<evidence type="ECO:0000250" key="1">
    <source>
        <dbReference type="UniProtKB" id="P02086"/>
    </source>
</evidence>
<evidence type="ECO:0000250" key="2">
    <source>
        <dbReference type="UniProtKB" id="P68871"/>
    </source>
</evidence>
<evidence type="ECO:0000255" key="3">
    <source>
        <dbReference type="PROSITE-ProRule" id="PRU00238"/>
    </source>
</evidence>
<evidence type="ECO:0000269" key="4">
    <source>
    </source>
</evidence>
<keyword id="KW-0007">Acetylation</keyword>
<keyword id="KW-0903">Direct protein sequencing</keyword>
<keyword id="KW-0349">Heme</keyword>
<keyword id="KW-0408">Iron</keyword>
<keyword id="KW-0479">Metal-binding</keyword>
<keyword id="KW-0561">Oxygen transport</keyword>
<keyword id="KW-0597">Phosphoprotein</keyword>
<keyword id="KW-1185">Reference proteome</keyword>
<keyword id="KW-0702">S-nitrosylation</keyword>
<keyword id="KW-0813">Transport</keyword>
<sequence length="147" mass="16114">MVHLTPEEKNAVTTLWGKVNVDEVGGEALGRLLVVYPWTQRFFESFGDLSSPDAVMGNPKVKAHGKKVLGAFSDGLNHLDNLKGTFAQLSELHCDKLHVDPENFKLLGNVLVCVLAHHFGKEFTPQVQAAYQKVVAGVANALAHKYH</sequence>